<evidence type="ECO:0000255" key="1">
    <source>
        <dbReference type="HAMAP-Rule" id="MF_00013"/>
    </source>
</evidence>
<evidence type="ECO:0000255" key="2">
    <source>
        <dbReference type="PROSITE-ProRule" id="PRU01067"/>
    </source>
</evidence>
<accession>Q2IXI4</accession>
<reference key="1">
    <citation type="submission" date="2006-01" db="EMBL/GenBank/DDBJ databases">
        <title>Complete sequence of Rhodopseudomonas palustris HaA2.</title>
        <authorList>
            <consortium name="US DOE Joint Genome Institute"/>
            <person name="Copeland A."/>
            <person name="Lucas S."/>
            <person name="Lapidus A."/>
            <person name="Barry K."/>
            <person name="Detter J.C."/>
            <person name="Glavina T."/>
            <person name="Hammon N."/>
            <person name="Israni S."/>
            <person name="Pitluck S."/>
            <person name="Chain P."/>
            <person name="Malfatti S."/>
            <person name="Shin M."/>
            <person name="Vergez L."/>
            <person name="Schmutz J."/>
            <person name="Larimer F."/>
            <person name="Land M."/>
            <person name="Hauser L."/>
            <person name="Pelletier D.A."/>
            <person name="Kyrpides N."/>
            <person name="Anderson I."/>
            <person name="Oda Y."/>
            <person name="Harwood C.S."/>
            <person name="Richardson P."/>
        </authorList>
    </citation>
    <scope>NUCLEOTIDE SEQUENCE [LARGE SCALE GENOMIC DNA]</scope>
    <source>
        <strain>HaA2</strain>
    </source>
</reference>
<feature type="chain" id="PRO_0000242757" description="Octanoyltransferase">
    <location>
        <begin position="1"/>
        <end position="255"/>
    </location>
</feature>
<feature type="domain" description="BPL/LPL catalytic" evidence="2">
    <location>
        <begin position="54"/>
        <end position="238"/>
    </location>
</feature>
<feature type="active site" description="Acyl-thioester intermediate" evidence="1">
    <location>
        <position position="198"/>
    </location>
</feature>
<feature type="binding site" evidence="1">
    <location>
        <begin position="92"/>
        <end position="99"/>
    </location>
    <ligand>
        <name>substrate</name>
    </ligand>
</feature>
<feature type="binding site" evidence="1">
    <location>
        <begin position="167"/>
        <end position="169"/>
    </location>
    <ligand>
        <name>substrate</name>
    </ligand>
</feature>
<feature type="binding site" evidence="1">
    <location>
        <begin position="180"/>
        <end position="182"/>
    </location>
    <ligand>
        <name>substrate</name>
    </ligand>
</feature>
<feature type="site" description="Lowers pKa of active site Cys" evidence="1">
    <location>
        <position position="164"/>
    </location>
</feature>
<protein>
    <recommendedName>
        <fullName evidence="1">Octanoyltransferase</fullName>
        <ecNumber evidence="1">2.3.1.181</ecNumber>
    </recommendedName>
    <alternativeName>
        <fullName evidence="1">Lipoate-protein ligase B</fullName>
    </alternativeName>
    <alternativeName>
        <fullName evidence="1">Lipoyl/octanoyl transferase</fullName>
    </alternativeName>
    <alternativeName>
        <fullName evidence="1">Octanoyl-[acyl-carrier-protein]-protein N-octanoyltransferase</fullName>
    </alternativeName>
</protein>
<gene>
    <name evidence="1" type="primary">lipB</name>
    <name type="ordered locus">RPB_2371</name>
</gene>
<proteinExistence type="inferred from homology"/>
<sequence length="255" mass="27505">MINAPLHARQTLDLAGFRPQADARPVEWLISEAPVPYPDAVAAMESRAAAIAAGDAAELVWLLEHPPLYTSGTSGQSTDLLDPRFPLHTTGRGGQLTYHGPGQRVAYVMLDLKRRRPDVRAYVAALEQWIIATLDAFNVRGERRENRVGVWVARPDKGADHEDKIAAIGVRLKRWVSLHGIAINVEPDLSHFTAIVPCGISDPRYGVTSLVDLGLPVTMADADIALRAAFTEIFGATVDAPQVDPAVDAGARSPA</sequence>
<comment type="function">
    <text evidence="1">Catalyzes the transfer of endogenously produced octanoic acid from octanoyl-acyl-carrier-protein onto the lipoyl domains of lipoate-dependent enzymes. Lipoyl-ACP can also act as a substrate although octanoyl-ACP is likely to be the physiological substrate.</text>
</comment>
<comment type="catalytic activity">
    <reaction evidence="1">
        <text>octanoyl-[ACP] + L-lysyl-[protein] = N(6)-octanoyl-L-lysyl-[protein] + holo-[ACP] + H(+)</text>
        <dbReference type="Rhea" id="RHEA:17665"/>
        <dbReference type="Rhea" id="RHEA-COMP:9636"/>
        <dbReference type="Rhea" id="RHEA-COMP:9685"/>
        <dbReference type="Rhea" id="RHEA-COMP:9752"/>
        <dbReference type="Rhea" id="RHEA-COMP:9928"/>
        <dbReference type="ChEBI" id="CHEBI:15378"/>
        <dbReference type="ChEBI" id="CHEBI:29969"/>
        <dbReference type="ChEBI" id="CHEBI:64479"/>
        <dbReference type="ChEBI" id="CHEBI:78463"/>
        <dbReference type="ChEBI" id="CHEBI:78809"/>
        <dbReference type="EC" id="2.3.1.181"/>
    </reaction>
</comment>
<comment type="pathway">
    <text evidence="1">Protein modification; protein lipoylation via endogenous pathway; protein N(6)-(lipoyl)lysine from octanoyl-[acyl-carrier-protein]: step 1/2.</text>
</comment>
<comment type="subcellular location">
    <subcellularLocation>
        <location evidence="1">Cytoplasm</location>
    </subcellularLocation>
</comment>
<comment type="miscellaneous">
    <text evidence="1">In the reaction, the free carboxyl group of octanoic acid is attached via an amide linkage to the epsilon-amino group of a specific lysine residue of lipoyl domains of lipoate-dependent enzymes.</text>
</comment>
<comment type="similarity">
    <text evidence="1">Belongs to the LipB family.</text>
</comment>
<keyword id="KW-0012">Acyltransferase</keyword>
<keyword id="KW-0963">Cytoplasm</keyword>
<keyword id="KW-1185">Reference proteome</keyword>
<keyword id="KW-0808">Transferase</keyword>
<organism>
    <name type="scientific">Rhodopseudomonas palustris (strain HaA2)</name>
    <dbReference type="NCBI Taxonomy" id="316058"/>
    <lineage>
        <taxon>Bacteria</taxon>
        <taxon>Pseudomonadati</taxon>
        <taxon>Pseudomonadota</taxon>
        <taxon>Alphaproteobacteria</taxon>
        <taxon>Hyphomicrobiales</taxon>
        <taxon>Nitrobacteraceae</taxon>
        <taxon>Rhodopseudomonas</taxon>
    </lineage>
</organism>
<dbReference type="EC" id="2.3.1.181" evidence="1"/>
<dbReference type="EMBL" id="CP000250">
    <property type="protein sequence ID" value="ABD07076.1"/>
    <property type="molecule type" value="Genomic_DNA"/>
</dbReference>
<dbReference type="RefSeq" id="WP_011441261.1">
    <property type="nucleotide sequence ID" value="NC_007778.1"/>
</dbReference>
<dbReference type="SMR" id="Q2IXI4"/>
<dbReference type="STRING" id="316058.RPB_2371"/>
<dbReference type="KEGG" id="rpb:RPB_2371"/>
<dbReference type="eggNOG" id="COG0321">
    <property type="taxonomic scope" value="Bacteria"/>
</dbReference>
<dbReference type="HOGENOM" id="CLU_035168_3_0_5"/>
<dbReference type="OrthoDB" id="9787061at2"/>
<dbReference type="UniPathway" id="UPA00538">
    <property type="reaction ID" value="UER00592"/>
</dbReference>
<dbReference type="Proteomes" id="UP000008809">
    <property type="component" value="Chromosome"/>
</dbReference>
<dbReference type="GO" id="GO:0005737">
    <property type="term" value="C:cytoplasm"/>
    <property type="evidence" value="ECO:0007669"/>
    <property type="project" value="UniProtKB-SubCell"/>
</dbReference>
<dbReference type="GO" id="GO:0033819">
    <property type="term" value="F:lipoyl(octanoyl) transferase activity"/>
    <property type="evidence" value="ECO:0007669"/>
    <property type="project" value="UniProtKB-EC"/>
</dbReference>
<dbReference type="GO" id="GO:0036211">
    <property type="term" value="P:protein modification process"/>
    <property type="evidence" value="ECO:0007669"/>
    <property type="project" value="InterPro"/>
</dbReference>
<dbReference type="CDD" id="cd16444">
    <property type="entry name" value="LipB"/>
    <property type="match status" value="1"/>
</dbReference>
<dbReference type="FunFam" id="3.30.930.10:FF:000159">
    <property type="entry name" value="Octanoyltransferase"/>
    <property type="match status" value="1"/>
</dbReference>
<dbReference type="Gene3D" id="3.30.930.10">
    <property type="entry name" value="Bira Bifunctional Protein, Domain 2"/>
    <property type="match status" value="1"/>
</dbReference>
<dbReference type="HAMAP" id="MF_00013">
    <property type="entry name" value="LipB"/>
    <property type="match status" value="1"/>
</dbReference>
<dbReference type="InterPro" id="IPR045864">
    <property type="entry name" value="aa-tRNA-synth_II/BPL/LPL"/>
</dbReference>
<dbReference type="InterPro" id="IPR004143">
    <property type="entry name" value="BPL_LPL_catalytic"/>
</dbReference>
<dbReference type="InterPro" id="IPR000544">
    <property type="entry name" value="Octanoyltransferase"/>
</dbReference>
<dbReference type="InterPro" id="IPR020605">
    <property type="entry name" value="Octanoyltransferase_CS"/>
</dbReference>
<dbReference type="NCBIfam" id="TIGR00214">
    <property type="entry name" value="lipB"/>
    <property type="match status" value="1"/>
</dbReference>
<dbReference type="NCBIfam" id="NF010921">
    <property type="entry name" value="PRK14341.1"/>
    <property type="match status" value="1"/>
</dbReference>
<dbReference type="NCBIfam" id="NF010925">
    <property type="entry name" value="PRK14345.1"/>
    <property type="match status" value="1"/>
</dbReference>
<dbReference type="PANTHER" id="PTHR10993:SF7">
    <property type="entry name" value="LIPOYLTRANSFERASE 2, MITOCHONDRIAL-RELATED"/>
    <property type="match status" value="1"/>
</dbReference>
<dbReference type="PANTHER" id="PTHR10993">
    <property type="entry name" value="OCTANOYLTRANSFERASE"/>
    <property type="match status" value="1"/>
</dbReference>
<dbReference type="Pfam" id="PF21948">
    <property type="entry name" value="LplA-B_cat"/>
    <property type="match status" value="1"/>
</dbReference>
<dbReference type="PIRSF" id="PIRSF016262">
    <property type="entry name" value="LPLase"/>
    <property type="match status" value="1"/>
</dbReference>
<dbReference type="SUPFAM" id="SSF55681">
    <property type="entry name" value="Class II aaRS and biotin synthetases"/>
    <property type="match status" value="1"/>
</dbReference>
<dbReference type="PROSITE" id="PS51733">
    <property type="entry name" value="BPL_LPL_CATALYTIC"/>
    <property type="match status" value="1"/>
</dbReference>
<dbReference type="PROSITE" id="PS01313">
    <property type="entry name" value="LIPB"/>
    <property type="match status" value="1"/>
</dbReference>
<name>LIPB_RHOP2</name>